<organism>
    <name type="scientific">Saccharomyces cerevisiae (strain ATCC 204508 / S288c)</name>
    <name type="common">Baker's yeast</name>
    <dbReference type="NCBI Taxonomy" id="559292"/>
    <lineage>
        <taxon>Eukaryota</taxon>
        <taxon>Fungi</taxon>
        <taxon>Dikarya</taxon>
        <taxon>Ascomycota</taxon>
        <taxon>Saccharomycotina</taxon>
        <taxon>Saccharomycetes</taxon>
        <taxon>Saccharomycetales</taxon>
        <taxon>Saccharomycetaceae</taxon>
        <taxon>Saccharomyces</taxon>
    </lineage>
</organism>
<dbReference type="EC" id="5.4.99.45"/>
<dbReference type="EMBL" id="D50617">
    <property type="protein sequence ID" value="BAA09239.1"/>
    <property type="molecule type" value="Genomic_DNA"/>
</dbReference>
<dbReference type="EMBL" id="AY693197">
    <property type="protein sequence ID" value="AAT93216.1"/>
    <property type="molecule type" value="Genomic_DNA"/>
</dbReference>
<dbReference type="EMBL" id="BK006940">
    <property type="protein sequence ID" value="DAA12440.1"/>
    <property type="molecule type" value="Genomic_DNA"/>
</dbReference>
<dbReference type="PIR" id="S14145">
    <property type="entry name" value="S14145"/>
</dbReference>
<dbReference type="RefSeq" id="NP_116655.1">
    <property type="nucleotide sequence ID" value="NM_001179965.1"/>
</dbReference>
<dbReference type="SMR" id="P31115"/>
<dbReference type="BioGRID" id="31148">
    <property type="interactions" value="427"/>
</dbReference>
<dbReference type="DIP" id="DIP-5151N"/>
<dbReference type="FunCoup" id="P31115">
    <property type="interactions" value="827"/>
</dbReference>
<dbReference type="IntAct" id="P31115">
    <property type="interactions" value="10"/>
</dbReference>
<dbReference type="STRING" id="4932.YFL001W"/>
<dbReference type="GlyGen" id="P31115">
    <property type="glycosylation" value="2 sites, 1 O-linked glycan (2 sites)"/>
</dbReference>
<dbReference type="iPTMnet" id="P31115"/>
<dbReference type="PaxDb" id="4932-YFL001W"/>
<dbReference type="PeptideAtlas" id="P31115"/>
<dbReference type="EnsemblFungi" id="YFL001W_mRNA">
    <property type="protein sequence ID" value="YFL001W"/>
    <property type="gene ID" value="YFL001W"/>
</dbReference>
<dbReference type="GeneID" id="850550"/>
<dbReference type="KEGG" id="sce:YFL001W"/>
<dbReference type="AGR" id="SGD:S000001895"/>
<dbReference type="SGD" id="S000001895">
    <property type="gene designation" value="DEG1"/>
</dbReference>
<dbReference type="VEuPathDB" id="FungiDB:YFL001W"/>
<dbReference type="eggNOG" id="KOG2554">
    <property type="taxonomic scope" value="Eukaryota"/>
</dbReference>
<dbReference type="GeneTree" id="ENSGT00950000183160"/>
<dbReference type="HOGENOM" id="CLU_014673_2_0_1"/>
<dbReference type="InParanoid" id="P31115"/>
<dbReference type="OMA" id="DCKFPEM"/>
<dbReference type="OrthoDB" id="25767at2759"/>
<dbReference type="BioCyc" id="MetaCyc:G3O-30453-MONOMER"/>
<dbReference type="BioCyc" id="YEAST:G3O-30453-MONOMER"/>
<dbReference type="BRENDA" id="5.4.99.12">
    <property type="organism ID" value="984"/>
</dbReference>
<dbReference type="BRENDA" id="5.4.99.45">
    <property type="organism ID" value="984"/>
</dbReference>
<dbReference type="BioGRID-ORCS" id="850550">
    <property type="hits" value="0 hits in 10 CRISPR screens"/>
</dbReference>
<dbReference type="PRO" id="PR:P31115"/>
<dbReference type="Proteomes" id="UP000002311">
    <property type="component" value="Chromosome VI"/>
</dbReference>
<dbReference type="RNAct" id="P31115">
    <property type="molecule type" value="protein"/>
</dbReference>
<dbReference type="GO" id="GO:0005737">
    <property type="term" value="C:cytoplasm"/>
    <property type="evidence" value="ECO:0000314"/>
    <property type="project" value="SGD"/>
</dbReference>
<dbReference type="GO" id="GO:0005634">
    <property type="term" value="C:nucleus"/>
    <property type="evidence" value="ECO:0000314"/>
    <property type="project" value="SGD"/>
</dbReference>
<dbReference type="GO" id="GO:0009982">
    <property type="term" value="F:pseudouridine synthase activity"/>
    <property type="evidence" value="ECO:0000314"/>
    <property type="project" value="SGD"/>
</dbReference>
<dbReference type="GO" id="GO:0003723">
    <property type="term" value="F:RNA binding"/>
    <property type="evidence" value="ECO:0007669"/>
    <property type="project" value="InterPro"/>
</dbReference>
<dbReference type="GO" id="GO:0160154">
    <property type="term" value="F:tRNA pseudouridine(38/39) synthase activity"/>
    <property type="evidence" value="ECO:0007669"/>
    <property type="project" value="UniProtKB-EC"/>
</dbReference>
<dbReference type="GO" id="GO:1990481">
    <property type="term" value="P:mRNA pseudouridine synthesis"/>
    <property type="evidence" value="ECO:0000315"/>
    <property type="project" value="SGD"/>
</dbReference>
<dbReference type="GO" id="GO:0031119">
    <property type="term" value="P:tRNA pseudouridine synthesis"/>
    <property type="evidence" value="ECO:0000314"/>
    <property type="project" value="SGD"/>
</dbReference>
<dbReference type="CDD" id="cd02569">
    <property type="entry name" value="PseudoU_synth_ScPus3"/>
    <property type="match status" value="1"/>
</dbReference>
<dbReference type="FunFam" id="3.30.70.580:FF:000020">
    <property type="entry name" value="tRNA pseudouridine synthase"/>
    <property type="match status" value="1"/>
</dbReference>
<dbReference type="FunFam" id="3.30.70.660:FF:000012">
    <property type="entry name" value="tRNA pseudouridine synthase"/>
    <property type="match status" value="1"/>
</dbReference>
<dbReference type="Gene3D" id="3.30.70.660">
    <property type="entry name" value="Pseudouridine synthase I, catalytic domain, C-terminal subdomain"/>
    <property type="match status" value="1"/>
</dbReference>
<dbReference type="Gene3D" id="3.30.70.580">
    <property type="entry name" value="Pseudouridine synthase I, catalytic domain, N-terminal subdomain"/>
    <property type="match status" value="1"/>
</dbReference>
<dbReference type="HAMAP" id="MF_00171">
    <property type="entry name" value="TruA"/>
    <property type="match status" value="1"/>
</dbReference>
<dbReference type="InterPro" id="IPR020103">
    <property type="entry name" value="PsdUridine_synth_cat_dom_sf"/>
</dbReference>
<dbReference type="InterPro" id="IPR001406">
    <property type="entry name" value="PsdUridine_synth_TruA"/>
</dbReference>
<dbReference type="InterPro" id="IPR020097">
    <property type="entry name" value="PsdUridine_synth_TruA_a/b_dom"/>
</dbReference>
<dbReference type="InterPro" id="IPR020095">
    <property type="entry name" value="PsdUridine_synth_TruA_C"/>
</dbReference>
<dbReference type="InterPro" id="IPR041707">
    <property type="entry name" value="Pus3-like"/>
</dbReference>
<dbReference type="InterPro" id="IPR020094">
    <property type="entry name" value="TruA/RsuA/RluB/E/F_N"/>
</dbReference>
<dbReference type="NCBIfam" id="TIGR00071">
    <property type="entry name" value="hisT_truA"/>
    <property type="match status" value="1"/>
</dbReference>
<dbReference type="PANTHER" id="PTHR11142">
    <property type="entry name" value="PSEUDOURIDYLATE SYNTHASE"/>
    <property type="match status" value="1"/>
</dbReference>
<dbReference type="PANTHER" id="PTHR11142:SF5">
    <property type="entry name" value="TRNA PSEUDOURIDINE(38_39) SYNTHASE"/>
    <property type="match status" value="1"/>
</dbReference>
<dbReference type="Pfam" id="PF01416">
    <property type="entry name" value="PseudoU_synth_1"/>
    <property type="match status" value="1"/>
</dbReference>
<dbReference type="SUPFAM" id="SSF55120">
    <property type="entry name" value="Pseudouridine synthase"/>
    <property type="match status" value="1"/>
</dbReference>
<reference key="1">
    <citation type="journal article" date="1991" name="Curr. Genet.">
        <title>A gene tightly linked to CEN6 is important for growth of Saccharomyces cerevisiae.</title>
        <authorList>
            <person name="Agostoni Carbone M.L."/>
            <person name="Solinas M."/>
            <person name="Sora S."/>
            <person name="Panzeri L."/>
        </authorList>
    </citation>
    <scope>NUCLEOTIDE SEQUENCE [GENOMIC DNA]</scope>
</reference>
<reference key="2">
    <citation type="journal article" date="1995" name="Nat. Genet.">
        <title>Analysis of the nucleotide sequence of chromosome VI from Saccharomyces cerevisiae.</title>
        <authorList>
            <person name="Murakami Y."/>
            <person name="Naitou M."/>
            <person name="Hagiwara H."/>
            <person name="Shibata T."/>
            <person name="Ozawa M."/>
            <person name="Sasanuma S."/>
            <person name="Sasanuma M."/>
            <person name="Tsuchiya Y."/>
            <person name="Soeda E."/>
            <person name="Yokoyama K."/>
            <person name="Yamazaki M."/>
            <person name="Tashiro H."/>
            <person name="Eki T."/>
        </authorList>
    </citation>
    <scope>NUCLEOTIDE SEQUENCE [LARGE SCALE GENOMIC DNA]</scope>
    <source>
        <strain>ATCC 204508 / S288c</strain>
    </source>
</reference>
<reference key="3">
    <citation type="journal article" date="2014" name="G3 (Bethesda)">
        <title>The reference genome sequence of Saccharomyces cerevisiae: Then and now.</title>
        <authorList>
            <person name="Engel S.R."/>
            <person name="Dietrich F.S."/>
            <person name="Fisk D.G."/>
            <person name="Binkley G."/>
            <person name="Balakrishnan R."/>
            <person name="Costanzo M.C."/>
            <person name="Dwight S.S."/>
            <person name="Hitz B.C."/>
            <person name="Karra K."/>
            <person name="Nash R.S."/>
            <person name="Weng S."/>
            <person name="Wong E.D."/>
            <person name="Lloyd P."/>
            <person name="Skrzypek M.S."/>
            <person name="Miyasato S.R."/>
            <person name="Simison M."/>
            <person name="Cherry J.M."/>
        </authorList>
    </citation>
    <scope>GENOME REANNOTATION</scope>
    <source>
        <strain>ATCC 204508 / S288c</strain>
    </source>
</reference>
<reference key="4">
    <citation type="journal article" date="1996" name="Yeast">
        <title>Sequencing of a 23 kb fragment from Saccharomyces cerevisiae chromosome VI.</title>
        <authorList>
            <person name="Naitou M."/>
            <person name="Ozawa M."/>
            <person name="Sasanuma S."/>
            <person name="Kobayashi M."/>
            <person name="Hagiwara H."/>
            <person name="Shibata T."/>
            <person name="Hanaoka F."/>
            <person name="Watanabe K."/>
            <person name="Ono A."/>
            <person name="Yamazaki M."/>
            <person name="Tashiro H."/>
            <person name="Eki T."/>
            <person name="Murakami Y."/>
        </authorList>
    </citation>
    <scope>NUCLEOTIDE SEQUENCE [GENOMIC DNA]</scope>
    <source>
        <strain>ATCC 204511 / S288c / AB972</strain>
    </source>
</reference>
<reference key="5">
    <citation type="journal article" date="2007" name="Genome Res.">
        <title>Approaching a complete repository of sequence-verified protein-encoding clones for Saccharomyces cerevisiae.</title>
        <authorList>
            <person name="Hu Y."/>
            <person name="Rolfs A."/>
            <person name="Bhullar B."/>
            <person name="Murthy T.V.S."/>
            <person name="Zhu C."/>
            <person name="Berger M.F."/>
            <person name="Camargo A.A."/>
            <person name="Kelley F."/>
            <person name="McCarron S."/>
            <person name="Jepson D."/>
            <person name="Richardson A."/>
            <person name="Raphael J."/>
            <person name="Moreira D."/>
            <person name="Taycher E."/>
            <person name="Zuo D."/>
            <person name="Mohr S."/>
            <person name="Kane M.F."/>
            <person name="Williamson J."/>
            <person name="Simpson A.J.G."/>
            <person name="Bulyk M.L."/>
            <person name="Harlow E."/>
            <person name="Marsischky G."/>
            <person name="Kolodner R.D."/>
            <person name="LaBaer J."/>
        </authorList>
    </citation>
    <scope>NUCLEOTIDE SEQUENCE [GENOMIC DNA]</scope>
    <source>
        <strain>ATCC 204508 / S288c</strain>
    </source>
</reference>
<reference key="6">
    <citation type="journal article" date="1998" name="J. Biol. Chem.">
        <title>Characterization of yeast protein Deg1 as pseudouridine synthase (Pus3) catalyzing the formation of psi 38 and psi 39 in tRNA anticodon loop.</title>
        <authorList>
            <person name="Lecointe F."/>
            <person name="Simos G."/>
            <person name="Sauer A."/>
            <person name="Hurt E.C."/>
            <person name="Motorin Y."/>
            <person name="Grosjean H."/>
        </authorList>
    </citation>
    <scope>FUNCTION</scope>
    <scope>CATALYTIC ACTIVITY</scope>
    <scope>SUBSTRATE SPECIFICITY</scope>
</reference>
<reference key="7">
    <citation type="journal article" date="2003" name="Nature">
        <title>Global analysis of protein expression in yeast.</title>
        <authorList>
            <person name="Ghaemmaghami S."/>
            <person name="Huh W.-K."/>
            <person name="Bower K."/>
            <person name="Howson R.W."/>
            <person name="Belle A."/>
            <person name="Dephoure N."/>
            <person name="O'Shea E.K."/>
            <person name="Weissman J.S."/>
        </authorList>
    </citation>
    <scope>LEVEL OF PROTEIN EXPRESSION [LARGE SCALE ANALYSIS]</scope>
</reference>
<protein>
    <recommendedName>
        <fullName>tRNA pseudouridine(38/39) synthase</fullName>
        <ecNumber>5.4.99.45</ecNumber>
    </recommendedName>
    <alternativeName>
        <fullName>Depressed growth-rate protein DEG1</fullName>
    </alternativeName>
    <alternativeName>
        <fullName>tRNA pseudouridine synthase 3</fullName>
    </alternativeName>
    <alternativeName>
        <fullName>tRNA pseudouridylate synthase 3</fullName>
    </alternativeName>
    <alternativeName>
        <fullName>tRNA-uridine isomerase 3</fullName>
    </alternativeName>
</protein>
<gene>
    <name type="primary">DEG1</name>
    <name type="synonym">HRM3</name>
    <name type="synonym">PUS3</name>
    <name type="ordered locus">YFL001W</name>
</gene>
<keyword id="KW-0413">Isomerase</keyword>
<keyword id="KW-0539">Nucleus</keyword>
<keyword id="KW-1185">Reference proteome</keyword>
<keyword id="KW-0819">tRNA processing</keyword>
<name>PUS3_YEAST</name>
<comment type="function">
    <text evidence="3">Formation of pseudouridines at positions 38 and 39 in the anticodon stem and loop of transfer RNAs.</text>
</comment>
<comment type="catalytic activity">
    <reaction evidence="3">
        <text>uridine(38/39) in tRNA = pseudouridine(38/39) in tRNA</text>
        <dbReference type="Rhea" id="RHEA:42564"/>
        <dbReference type="Rhea" id="RHEA-COMP:10117"/>
        <dbReference type="Rhea" id="RHEA-COMP:10118"/>
        <dbReference type="ChEBI" id="CHEBI:65314"/>
        <dbReference type="ChEBI" id="CHEBI:65315"/>
        <dbReference type="EC" id="5.4.99.45"/>
    </reaction>
</comment>
<comment type="subcellular location">
    <subcellularLocation>
        <location>Nucleus</location>
    </subcellularLocation>
</comment>
<comment type="miscellaneous">
    <text evidence="2">Present with 5860 molecules/cell in log phase SD medium.</text>
</comment>
<comment type="similarity">
    <text evidence="4">Belongs to the tRNA pseudouridine synthase TruA family.</text>
</comment>
<feature type="chain" id="PRO_0000057519" description="tRNA pseudouridine(38/39) synthase">
    <location>
        <begin position="1"/>
        <end position="442"/>
    </location>
</feature>
<feature type="active site" description="Nucleophile" evidence="1">
    <location>
        <position position="151"/>
    </location>
</feature>
<feature type="binding site" evidence="1">
    <location>
        <position position="222"/>
    </location>
    <ligand>
        <name>substrate</name>
    </ligand>
</feature>
<evidence type="ECO:0000250" key="1"/>
<evidence type="ECO:0000269" key="2">
    <source>
    </source>
</evidence>
<evidence type="ECO:0000269" key="3">
    <source>
    </source>
</evidence>
<evidence type="ECO:0000305" key="4"/>
<sequence>MSNFIRRLVGKMKAISTGTNAIVSKKDSIYANWSKEQLIRRITELENANKPHSEKFQHIEDNKKRKISQEEVTRSKAKKAPKKFDFSKHNTRFIALRFAYLGWNYNGLAVQKEYTPLPTVEGTILEAMNKCKLVPSMVLQDYKFSRCGRTDKGVSAMNQVISLEVRSNLTDEEQRDPTNDSREIPYVHVLNQLLPDDIRISAVCLRPPPNFDARFSCVHRHYKYIFNGKNLNIEKMSKAASYFVGERDFRNFCKLDGSKQITNFKRTIISSKILPLSETFYCFDLVGSAFLWHQVRCMMAILFLVGQSLEVPEIVLRLTDIEKTPQRPVYEMANDIPLLLYDCKFPEMDWQEPTVDDYKAIKFTTATEALTLHYELKAAVCNIFKDVLPTANTNNFSKTIINLGDGRGKVVGTYVKLEDRSVMEPVEVVNAKYSKKKNNKNK</sequence>
<accession>P31115</accession>
<accession>D6VTN0</accession>
<proteinExistence type="evidence at protein level"/>